<reference key="1">
    <citation type="journal article" date="1995" name="Plant Mol. Biol. Rep.">
        <title>Nucleotide sequence of the cyanelle DNA from Cyanophora paradoxa.</title>
        <authorList>
            <person name="Stirewalt V.L."/>
            <person name="Michalowski C.B."/>
            <person name="Loeffelhardt W."/>
            <person name="Bohnert H.J."/>
            <person name="Bryant D.A."/>
        </authorList>
    </citation>
    <scope>NUCLEOTIDE SEQUENCE [LARGE SCALE GENOMIC DNA]</scope>
    <source>
        <strain>UTEX LB 555 / Pringsheim</strain>
    </source>
</reference>
<reference key="2">
    <citation type="book" date="1997" name="Eukaryotism and symbiosis">
        <title>The complete sequence of the cyanelle genome of Cyanophora paradoxa: the genetic complexity of a primitive plastid.</title>
        <editorList>
            <person name="Schenk H.E.A."/>
            <person name="Herrmann R."/>
            <person name="Jeon K.W."/>
            <person name="Mueller N.E."/>
            <person name="Schwemmler W."/>
        </editorList>
        <authorList>
            <person name="Loeffelhardt W."/>
            <person name="Stirewalt V.L."/>
            <person name="Michalowski C.B."/>
            <person name="Annarella M."/>
            <person name="Farley J.Y."/>
            <person name="Schluchter W.M."/>
            <person name="Chung S."/>
            <person name="Newmann-Spallart C."/>
            <person name="Steiner J.M."/>
            <person name="Jakowitsch J."/>
            <person name="Bohnert H.J."/>
            <person name="Bryant D.A."/>
        </authorList>
    </citation>
    <scope>NUCLEOTIDE SEQUENCE [LARGE SCALE GENOMIC DNA]</scope>
    <source>
        <strain>UTEX LB 555 / Pringsheim</strain>
    </source>
</reference>
<protein>
    <recommendedName>
        <fullName evidence="1">Large ribosomal subunit protein bL28c</fullName>
    </recommendedName>
    <alternativeName>
        <fullName>50S ribosomal protein L28, cyanelle</fullName>
    </alternativeName>
</protein>
<sequence length="70" mass="8161">MARQCELTGKKANNGYTVSHSHRRTKCLQKANLQTKRIWSPTLKRWLKLQVSTKVIKDLKRKSIDALLKI</sequence>
<proteinExistence type="inferred from homology"/>
<geneLocation type="cyanelle"/>
<dbReference type="EMBL" id="U30821">
    <property type="protein sequence ID" value="AAA81263.1"/>
    <property type="molecule type" value="Genomic_DNA"/>
</dbReference>
<dbReference type="PIR" id="T06920">
    <property type="entry name" value="T06920"/>
</dbReference>
<dbReference type="RefSeq" id="NP_043232.1">
    <property type="nucleotide sequence ID" value="NC_001675.1"/>
</dbReference>
<dbReference type="SMR" id="P48129"/>
<dbReference type="GeneID" id="801624"/>
<dbReference type="GO" id="GO:0009842">
    <property type="term" value="C:cyanelle"/>
    <property type="evidence" value="ECO:0007669"/>
    <property type="project" value="UniProtKB-SubCell"/>
</dbReference>
<dbReference type="GO" id="GO:1990904">
    <property type="term" value="C:ribonucleoprotein complex"/>
    <property type="evidence" value="ECO:0007669"/>
    <property type="project" value="UniProtKB-KW"/>
</dbReference>
<dbReference type="GO" id="GO:0005840">
    <property type="term" value="C:ribosome"/>
    <property type="evidence" value="ECO:0007669"/>
    <property type="project" value="UniProtKB-KW"/>
</dbReference>
<dbReference type="GO" id="GO:0003735">
    <property type="term" value="F:structural constituent of ribosome"/>
    <property type="evidence" value="ECO:0007669"/>
    <property type="project" value="InterPro"/>
</dbReference>
<dbReference type="GO" id="GO:0006412">
    <property type="term" value="P:translation"/>
    <property type="evidence" value="ECO:0007669"/>
    <property type="project" value="InterPro"/>
</dbReference>
<dbReference type="Gene3D" id="2.30.170.40">
    <property type="entry name" value="Ribosomal protein L28/L24"/>
    <property type="match status" value="1"/>
</dbReference>
<dbReference type="HAMAP" id="MF_00373">
    <property type="entry name" value="Ribosomal_bL28"/>
    <property type="match status" value="1"/>
</dbReference>
<dbReference type="InterPro" id="IPR026569">
    <property type="entry name" value="Ribosomal_bL28"/>
</dbReference>
<dbReference type="InterPro" id="IPR034704">
    <property type="entry name" value="Ribosomal_bL28/bL31-like_sf"/>
</dbReference>
<dbReference type="InterPro" id="IPR001383">
    <property type="entry name" value="Ribosomal_bL28_bact-type"/>
</dbReference>
<dbReference type="InterPro" id="IPR037147">
    <property type="entry name" value="Ribosomal_bL28_sf"/>
</dbReference>
<dbReference type="NCBIfam" id="TIGR00009">
    <property type="entry name" value="L28"/>
    <property type="match status" value="1"/>
</dbReference>
<dbReference type="PANTHER" id="PTHR13528">
    <property type="entry name" value="39S RIBOSOMAL PROTEIN L28, MITOCHONDRIAL"/>
    <property type="match status" value="1"/>
</dbReference>
<dbReference type="PANTHER" id="PTHR13528:SF2">
    <property type="entry name" value="LARGE RIBOSOMAL SUBUNIT PROTEIN BL28M"/>
    <property type="match status" value="1"/>
</dbReference>
<dbReference type="Pfam" id="PF00830">
    <property type="entry name" value="Ribosomal_L28"/>
    <property type="match status" value="1"/>
</dbReference>
<dbReference type="SUPFAM" id="SSF143800">
    <property type="entry name" value="L28p-like"/>
    <property type="match status" value="1"/>
</dbReference>
<organism>
    <name type="scientific">Cyanophora paradoxa</name>
    <dbReference type="NCBI Taxonomy" id="2762"/>
    <lineage>
        <taxon>Eukaryota</taxon>
        <taxon>Glaucocystophyceae</taxon>
        <taxon>Cyanophoraceae</taxon>
        <taxon>Cyanophora</taxon>
    </lineage>
</organism>
<comment type="subcellular location">
    <subcellularLocation>
        <location>Plastid</location>
        <location>Cyanelle</location>
    </subcellularLocation>
</comment>
<comment type="similarity">
    <text evidence="1">Belongs to the bacterial ribosomal protein bL28 family.</text>
</comment>
<keyword id="KW-0194">Cyanelle</keyword>
<keyword id="KW-0934">Plastid</keyword>
<keyword id="KW-0687">Ribonucleoprotein</keyword>
<keyword id="KW-0689">Ribosomal protein</keyword>
<name>RK28_CYAPA</name>
<feature type="chain" id="PRO_0000178600" description="Large ribosomal subunit protein bL28c">
    <location>
        <begin position="1"/>
        <end position="70"/>
    </location>
</feature>
<gene>
    <name type="primary">rpl28</name>
</gene>
<evidence type="ECO:0000305" key="1"/>
<accession>P48129</accession>